<accession>Q2G7J5</accession>
<keyword id="KW-0227">DNA damage</keyword>
<keyword id="KW-0234">DNA repair</keyword>
<keyword id="KW-0235">DNA replication</keyword>
<keyword id="KW-0436">Ligase</keyword>
<keyword id="KW-0460">Magnesium</keyword>
<keyword id="KW-0464">Manganese</keyword>
<keyword id="KW-0479">Metal-binding</keyword>
<keyword id="KW-0520">NAD</keyword>
<keyword id="KW-1185">Reference proteome</keyword>
<keyword id="KW-0862">Zinc</keyword>
<dbReference type="EC" id="6.5.1.2" evidence="1"/>
<dbReference type="EMBL" id="CP000248">
    <property type="protein sequence ID" value="ABD26178.1"/>
    <property type="molecule type" value="Genomic_DNA"/>
</dbReference>
<dbReference type="RefSeq" id="WP_011445388.1">
    <property type="nucleotide sequence ID" value="NC_007794.1"/>
</dbReference>
<dbReference type="SMR" id="Q2G7J5"/>
<dbReference type="STRING" id="279238.Saro_1738"/>
<dbReference type="KEGG" id="nar:Saro_1738"/>
<dbReference type="eggNOG" id="COG0272">
    <property type="taxonomic scope" value="Bacteria"/>
</dbReference>
<dbReference type="HOGENOM" id="CLU_007764_2_1_5"/>
<dbReference type="Proteomes" id="UP000009134">
    <property type="component" value="Chromosome"/>
</dbReference>
<dbReference type="GO" id="GO:0005829">
    <property type="term" value="C:cytosol"/>
    <property type="evidence" value="ECO:0007669"/>
    <property type="project" value="TreeGrafter"/>
</dbReference>
<dbReference type="GO" id="GO:0003911">
    <property type="term" value="F:DNA ligase (NAD+) activity"/>
    <property type="evidence" value="ECO:0007669"/>
    <property type="project" value="UniProtKB-UniRule"/>
</dbReference>
<dbReference type="GO" id="GO:0046872">
    <property type="term" value="F:metal ion binding"/>
    <property type="evidence" value="ECO:0007669"/>
    <property type="project" value="UniProtKB-KW"/>
</dbReference>
<dbReference type="GO" id="GO:0006281">
    <property type="term" value="P:DNA repair"/>
    <property type="evidence" value="ECO:0007669"/>
    <property type="project" value="UniProtKB-KW"/>
</dbReference>
<dbReference type="GO" id="GO:0006260">
    <property type="term" value="P:DNA replication"/>
    <property type="evidence" value="ECO:0007669"/>
    <property type="project" value="UniProtKB-KW"/>
</dbReference>
<dbReference type="CDD" id="cd17748">
    <property type="entry name" value="BRCT_DNA_ligase_like"/>
    <property type="match status" value="1"/>
</dbReference>
<dbReference type="CDD" id="cd00114">
    <property type="entry name" value="LIGANc"/>
    <property type="match status" value="1"/>
</dbReference>
<dbReference type="FunFam" id="1.10.150.20:FF:000007">
    <property type="entry name" value="DNA ligase"/>
    <property type="match status" value="1"/>
</dbReference>
<dbReference type="FunFam" id="3.30.470.30:FF:000001">
    <property type="entry name" value="DNA ligase"/>
    <property type="match status" value="1"/>
</dbReference>
<dbReference type="Gene3D" id="6.20.10.30">
    <property type="match status" value="1"/>
</dbReference>
<dbReference type="Gene3D" id="1.10.150.20">
    <property type="entry name" value="5' to 3' exonuclease, C-terminal subdomain"/>
    <property type="match status" value="2"/>
</dbReference>
<dbReference type="Gene3D" id="3.40.50.10190">
    <property type="entry name" value="BRCT domain"/>
    <property type="match status" value="1"/>
</dbReference>
<dbReference type="Gene3D" id="3.30.470.30">
    <property type="entry name" value="DNA ligase/mRNA capping enzyme"/>
    <property type="match status" value="1"/>
</dbReference>
<dbReference type="Gene3D" id="1.10.287.610">
    <property type="entry name" value="Helix hairpin bin"/>
    <property type="match status" value="1"/>
</dbReference>
<dbReference type="Gene3D" id="2.40.50.140">
    <property type="entry name" value="Nucleic acid-binding proteins"/>
    <property type="match status" value="1"/>
</dbReference>
<dbReference type="HAMAP" id="MF_01588">
    <property type="entry name" value="DNA_ligase_A"/>
    <property type="match status" value="1"/>
</dbReference>
<dbReference type="InterPro" id="IPR001357">
    <property type="entry name" value="BRCT_dom"/>
</dbReference>
<dbReference type="InterPro" id="IPR036420">
    <property type="entry name" value="BRCT_dom_sf"/>
</dbReference>
<dbReference type="InterPro" id="IPR041663">
    <property type="entry name" value="DisA/LigA_HHH"/>
</dbReference>
<dbReference type="InterPro" id="IPR001679">
    <property type="entry name" value="DNA_ligase"/>
</dbReference>
<dbReference type="InterPro" id="IPR018239">
    <property type="entry name" value="DNA_ligase_AS"/>
</dbReference>
<dbReference type="InterPro" id="IPR033136">
    <property type="entry name" value="DNA_ligase_CS"/>
</dbReference>
<dbReference type="InterPro" id="IPR013839">
    <property type="entry name" value="DNAligase_adenylation"/>
</dbReference>
<dbReference type="InterPro" id="IPR013840">
    <property type="entry name" value="DNAligase_N"/>
</dbReference>
<dbReference type="InterPro" id="IPR012340">
    <property type="entry name" value="NA-bd_OB-fold"/>
</dbReference>
<dbReference type="InterPro" id="IPR004150">
    <property type="entry name" value="NAD_DNA_ligase_OB"/>
</dbReference>
<dbReference type="InterPro" id="IPR010994">
    <property type="entry name" value="RuvA_2-like"/>
</dbReference>
<dbReference type="InterPro" id="IPR004149">
    <property type="entry name" value="Znf_DNAligase_C4"/>
</dbReference>
<dbReference type="NCBIfam" id="TIGR00575">
    <property type="entry name" value="dnlj"/>
    <property type="match status" value="1"/>
</dbReference>
<dbReference type="NCBIfam" id="NF005932">
    <property type="entry name" value="PRK07956.1"/>
    <property type="match status" value="1"/>
</dbReference>
<dbReference type="PANTHER" id="PTHR23389">
    <property type="entry name" value="CHROMOSOME TRANSMISSION FIDELITY FACTOR 18"/>
    <property type="match status" value="1"/>
</dbReference>
<dbReference type="PANTHER" id="PTHR23389:SF9">
    <property type="entry name" value="DNA LIGASE"/>
    <property type="match status" value="1"/>
</dbReference>
<dbReference type="Pfam" id="PF00533">
    <property type="entry name" value="BRCT"/>
    <property type="match status" value="1"/>
</dbReference>
<dbReference type="Pfam" id="PF01653">
    <property type="entry name" value="DNA_ligase_aden"/>
    <property type="match status" value="1"/>
</dbReference>
<dbReference type="Pfam" id="PF03120">
    <property type="entry name" value="DNA_ligase_OB"/>
    <property type="match status" value="1"/>
</dbReference>
<dbReference type="Pfam" id="PF03119">
    <property type="entry name" value="DNA_ligase_ZBD"/>
    <property type="match status" value="1"/>
</dbReference>
<dbReference type="Pfam" id="PF12826">
    <property type="entry name" value="HHH_2"/>
    <property type="match status" value="1"/>
</dbReference>
<dbReference type="PIRSF" id="PIRSF001604">
    <property type="entry name" value="LigA"/>
    <property type="match status" value="1"/>
</dbReference>
<dbReference type="SMART" id="SM00292">
    <property type="entry name" value="BRCT"/>
    <property type="match status" value="1"/>
</dbReference>
<dbReference type="SMART" id="SM00532">
    <property type="entry name" value="LIGANc"/>
    <property type="match status" value="1"/>
</dbReference>
<dbReference type="SUPFAM" id="SSF52113">
    <property type="entry name" value="BRCT domain"/>
    <property type="match status" value="1"/>
</dbReference>
<dbReference type="SUPFAM" id="SSF56091">
    <property type="entry name" value="DNA ligase/mRNA capping enzyme, catalytic domain"/>
    <property type="match status" value="1"/>
</dbReference>
<dbReference type="SUPFAM" id="SSF50249">
    <property type="entry name" value="Nucleic acid-binding proteins"/>
    <property type="match status" value="1"/>
</dbReference>
<dbReference type="SUPFAM" id="SSF47781">
    <property type="entry name" value="RuvA domain 2-like"/>
    <property type="match status" value="1"/>
</dbReference>
<dbReference type="PROSITE" id="PS50172">
    <property type="entry name" value="BRCT"/>
    <property type="match status" value="1"/>
</dbReference>
<dbReference type="PROSITE" id="PS01055">
    <property type="entry name" value="DNA_LIGASE_N1"/>
    <property type="match status" value="1"/>
</dbReference>
<dbReference type="PROSITE" id="PS01056">
    <property type="entry name" value="DNA_LIGASE_N2"/>
    <property type="match status" value="1"/>
</dbReference>
<proteinExistence type="inferred from homology"/>
<gene>
    <name evidence="1" type="primary">ligA</name>
    <name type="ordered locus">Saro_1738</name>
</gene>
<feature type="chain" id="PRO_0000313345" description="DNA ligase">
    <location>
        <begin position="1"/>
        <end position="721"/>
    </location>
</feature>
<feature type="domain" description="BRCT" evidence="1">
    <location>
        <begin position="641"/>
        <end position="721"/>
    </location>
</feature>
<feature type="region of interest" description="Disordered" evidence="2">
    <location>
        <begin position="556"/>
        <end position="588"/>
    </location>
</feature>
<feature type="active site" description="N6-AMP-lysine intermediate" evidence="1">
    <location>
        <position position="125"/>
    </location>
</feature>
<feature type="binding site" evidence="1">
    <location>
        <begin position="39"/>
        <end position="43"/>
    </location>
    <ligand>
        <name>NAD(+)</name>
        <dbReference type="ChEBI" id="CHEBI:57540"/>
    </ligand>
</feature>
<feature type="binding site" evidence="1">
    <location>
        <begin position="89"/>
        <end position="90"/>
    </location>
    <ligand>
        <name>NAD(+)</name>
        <dbReference type="ChEBI" id="CHEBI:57540"/>
    </ligand>
</feature>
<feature type="binding site" evidence="1">
    <location>
        <position position="123"/>
    </location>
    <ligand>
        <name>NAD(+)</name>
        <dbReference type="ChEBI" id="CHEBI:57540"/>
    </ligand>
</feature>
<feature type="binding site" evidence="1">
    <location>
        <position position="146"/>
    </location>
    <ligand>
        <name>NAD(+)</name>
        <dbReference type="ChEBI" id="CHEBI:57540"/>
    </ligand>
</feature>
<feature type="binding site" evidence="1">
    <location>
        <position position="186"/>
    </location>
    <ligand>
        <name>NAD(+)</name>
        <dbReference type="ChEBI" id="CHEBI:57540"/>
    </ligand>
</feature>
<feature type="binding site" evidence="1">
    <location>
        <position position="302"/>
    </location>
    <ligand>
        <name>NAD(+)</name>
        <dbReference type="ChEBI" id="CHEBI:57540"/>
    </ligand>
</feature>
<feature type="binding site" evidence="1">
    <location>
        <position position="326"/>
    </location>
    <ligand>
        <name>NAD(+)</name>
        <dbReference type="ChEBI" id="CHEBI:57540"/>
    </ligand>
</feature>
<feature type="binding site" evidence="1">
    <location>
        <position position="418"/>
    </location>
    <ligand>
        <name>Zn(2+)</name>
        <dbReference type="ChEBI" id="CHEBI:29105"/>
    </ligand>
</feature>
<feature type="binding site" evidence="1">
    <location>
        <position position="421"/>
    </location>
    <ligand>
        <name>Zn(2+)</name>
        <dbReference type="ChEBI" id="CHEBI:29105"/>
    </ligand>
</feature>
<feature type="binding site" evidence="1">
    <location>
        <position position="436"/>
    </location>
    <ligand>
        <name>Zn(2+)</name>
        <dbReference type="ChEBI" id="CHEBI:29105"/>
    </ligand>
</feature>
<feature type="binding site" evidence="1">
    <location>
        <position position="442"/>
    </location>
    <ligand>
        <name>Zn(2+)</name>
        <dbReference type="ChEBI" id="CHEBI:29105"/>
    </ligand>
</feature>
<reference key="1">
    <citation type="submission" date="2006-01" db="EMBL/GenBank/DDBJ databases">
        <title>Complete sequence of Novosphingobium aromaticivorans DSM 12444.</title>
        <authorList>
            <consortium name="US DOE Joint Genome Institute"/>
            <person name="Copeland A."/>
            <person name="Lucas S."/>
            <person name="Lapidus A."/>
            <person name="Barry K."/>
            <person name="Detter J.C."/>
            <person name="Glavina T."/>
            <person name="Hammon N."/>
            <person name="Israni S."/>
            <person name="Pitluck S."/>
            <person name="Chain P."/>
            <person name="Malfatti S."/>
            <person name="Shin M."/>
            <person name="Vergez L."/>
            <person name="Schmutz J."/>
            <person name="Larimer F."/>
            <person name="Land M."/>
            <person name="Kyrpides N."/>
            <person name="Ivanova N."/>
            <person name="Fredrickson J."/>
            <person name="Balkwill D."/>
            <person name="Romine M.F."/>
            <person name="Richardson P."/>
        </authorList>
    </citation>
    <scope>NUCLEOTIDE SEQUENCE [LARGE SCALE GENOMIC DNA]</scope>
    <source>
        <strain>ATCC 700278 / DSM 12444 / CCUG 56034 / CIP 105152 / NBRC 16084 / F199</strain>
    </source>
</reference>
<evidence type="ECO:0000255" key="1">
    <source>
        <dbReference type="HAMAP-Rule" id="MF_01588"/>
    </source>
</evidence>
<evidence type="ECO:0000256" key="2">
    <source>
        <dbReference type="SAM" id="MobiDB-lite"/>
    </source>
</evidence>
<protein>
    <recommendedName>
        <fullName evidence="1">DNA ligase</fullName>
        <ecNumber evidence="1">6.5.1.2</ecNumber>
    </recommendedName>
    <alternativeName>
        <fullName evidence="1">Polydeoxyribonucleotide synthase [NAD(+)]</fullName>
    </alternativeName>
</protein>
<organism>
    <name type="scientific">Novosphingobium aromaticivorans (strain ATCC 700278 / DSM 12444 / CCUG 56034 / CIP 105152 / NBRC 16084 / F199)</name>
    <dbReference type="NCBI Taxonomy" id="279238"/>
    <lineage>
        <taxon>Bacteria</taxon>
        <taxon>Pseudomonadati</taxon>
        <taxon>Pseudomonadota</taxon>
        <taxon>Alphaproteobacteria</taxon>
        <taxon>Sphingomonadales</taxon>
        <taxon>Sphingomonadaceae</taxon>
        <taxon>Novosphingobium</taxon>
    </lineage>
</organism>
<comment type="function">
    <text evidence="1">DNA ligase that catalyzes the formation of phosphodiester linkages between 5'-phosphoryl and 3'-hydroxyl groups in double-stranded DNA using NAD as a coenzyme and as the energy source for the reaction. It is essential for DNA replication and repair of damaged DNA.</text>
</comment>
<comment type="catalytic activity">
    <reaction evidence="1">
        <text>NAD(+) + (deoxyribonucleotide)n-3'-hydroxyl + 5'-phospho-(deoxyribonucleotide)m = (deoxyribonucleotide)n+m + AMP + beta-nicotinamide D-nucleotide.</text>
        <dbReference type="EC" id="6.5.1.2"/>
    </reaction>
</comment>
<comment type="cofactor">
    <cofactor evidence="1">
        <name>Mg(2+)</name>
        <dbReference type="ChEBI" id="CHEBI:18420"/>
    </cofactor>
    <cofactor evidence="1">
        <name>Mn(2+)</name>
        <dbReference type="ChEBI" id="CHEBI:29035"/>
    </cofactor>
</comment>
<comment type="similarity">
    <text evidence="1">Belongs to the NAD-dependent DNA ligase family. LigA subfamily.</text>
</comment>
<sequence>MTTSALTEAEAANELMRLARQIAKHNRLYHAEDSPEITDAEYDALVRRNAELEAAFPHLIRPDSPSAQIGHEIAASPLGKVQHEVRMMSLDNAFTDEEVEEFVARVRRFLALPEDAEVVMTAEDKIDGLSCSLRYENGRLVRAATRGDGQVGEDVTANVAHIPDIPQELKAAGLFDIPAVFEIRGEVYMAKDDFLALNARQAEAGEKIFANPRNGAAGSLRQKDASVTASRPLRFLAHGWGAASEVPAATQFEMMRKIADWGVPVSPLLVRCSSAAEMVAHYRDIGEKRASLPYDIDGVVYKVDRLDWQDRLGFVAKAPRWGIAHKFPAERAETTLDAIDIQVGRTGKLTPVGRLKPVLVGGVTVTNVTLHNRDEIGRLGLRVGDRIVLQRAGDVIPQVVENLTREEPRDPYHFPDHCPECGSEAVAEEGEVDVRCTGGLICPAQRVERLKHFVSRAALDIEGLGEKTIIEFFQLGWLESPADIFRLRKRRSEIVGREGWKDKSVDNLLAAIEAKRQPDAARLLFGLGIRHVGAVTARDLMKRFVTLPALREAARQASSAAREGEPANADGAYDPATVTPDSDTAGAEAGRSDALADLLSIDGVGPVVVEALGDFFHEPHNIAVWEDLLSEVSPPPYVVETKDSAVAGKTIVFTGKLETMSRDEAKAQAEALGARTAGSVSAKTDLVVAGPGAGSKLKQAAALGIDVIDEAAWAEIVRQAG</sequence>
<name>DNLJ_NOVAD</name>